<protein>
    <recommendedName>
        <fullName>Putative 4-hydroxy-4-methyl-2-oxoglutarate aldolase</fullName>
        <shortName>HMG aldolase</shortName>
        <ecNumber>4.1.3.17</ecNumber>
    </recommendedName>
    <alternativeName>
        <fullName>Oxaloacetate decarboxylase</fullName>
        <shortName>OAA decarboxylase</shortName>
        <ecNumber>4.1.1.112</ecNumber>
    </alternativeName>
    <alternativeName>
        <fullName>Regulator of ribonuclease activity homolog</fullName>
    </alternativeName>
    <alternativeName>
        <fullName>RraA-like protein</fullName>
    </alternativeName>
</protein>
<dbReference type="EC" id="4.1.3.17"/>
<dbReference type="EC" id="4.1.1.112"/>
<dbReference type="EMBL" id="CP000267">
    <property type="protein sequence ID" value="ABD69680.1"/>
    <property type="molecule type" value="Genomic_DNA"/>
</dbReference>
<dbReference type="RefSeq" id="WP_011464248.1">
    <property type="nucleotide sequence ID" value="NC_007908.1"/>
</dbReference>
<dbReference type="SMR" id="Q21X23"/>
<dbReference type="STRING" id="338969.Rfer_1955"/>
<dbReference type="KEGG" id="rfr:Rfer_1955"/>
<dbReference type="eggNOG" id="COG0684">
    <property type="taxonomic scope" value="Bacteria"/>
</dbReference>
<dbReference type="HOGENOM" id="CLU_072626_4_0_4"/>
<dbReference type="OrthoDB" id="943692at2"/>
<dbReference type="Proteomes" id="UP000008332">
    <property type="component" value="Chromosome"/>
</dbReference>
<dbReference type="GO" id="GO:0047443">
    <property type="term" value="F:4-hydroxy-4-methyl-2-oxoglutarate aldolase activity"/>
    <property type="evidence" value="ECO:0007669"/>
    <property type="project" value="UniProtKB-EC"/>
</dbReference>
<dbReference type="GO" id="GO:0046872">
    <property type="term" value="F:metal ion binding"/>
    <property type="evidence" value="ECO:0007669"/>
    <property type="project" value="UniProtKB-KW"/>
</dbReference>
<dbReference type="GO" id="GO:0008948">
    <property type="term" value="F:oxaloacetate decarboxylase activity"/>
    <property type="evidence" value="ECO:0007669"/>
    <property type="project" value="UniProtKB-EC"/>
</dbReference>
<dbReference type="GO" id="GO:0008428">
    <property type="term" value="F:ribonuclease inhibitor activity"/>
    <property type="evidence" value="ECO:0007669"/>
    <property type="project" value="InterPro"/>
</dbReference>
<dbReference type="GO" id="GO:0051252">
    <property type="term" value="P:regulation of RNA metabolic process"/>
    <property type="evidence" value="ECO:0007669"/>
    <property type="project" value="InterPro"/>
</dbReference>
<dbReference type="CDD" id="cd16841">
    <property type="entry name" value="RraA_family"/>
    <property type="match status" value="1"/>
</dbReference>
<dbReference type="Gene3D" id="3.50.30.40">
    <property type="entry name" value="Ribonuclease E inhibitor RraA/RraA-like"/>
    <property type="match status" value="1"/>
</dbReference>
<dbReference type="InterPro" id="IPR010203">
    <property type="entry name" value="RraA"/>
</dbReference>
<dbReference type="InterPro" id="IPR005493">
    <property type="entry name" value="RraA/RraA-like"/>
</dbReference>
<dbReference type="InterPro" id="IPR036704">
    <property type="entry name" value="RraA/RraA-like_sf"/>
</dbReference>
<dbReference type="NCBIfam" id="TIGR01935">
    <property type="entry name" value="NOT-MenG"/>
    <property type="match status" value="1"/>
</dbReference>
<dbReference type="NCBIfam" id="NF006875">
    <property type="entry name" value="PRK09372.1"/>
    <property type="match status" value="1"/>
</dbReference>
<dbReference type="PANTHER" id="PTHR33254">
    <property type="entry name" value="4-HYDROXY-4-METHYL-2-OXOGLUTARATE ALDOLASE 3-RELATED"/>
    <property type="match status" value="1"/>
</dbReference>
<dbReference type="PANTHER" id="PTHR33254:SF4">
    <property type="entry name" value="4-HYDROXY-4-METHYL-2-OXOGLUTARATE ALDOLASE 3-RELATED"/>
    <property type="match status" value="1"/>
</dbReference>
<dbReference type="Pfam" id="PF03737">
    <property type="entry name" value="RraA-like"/>
    <property type="match status" value="1"/>
</dbReference>
<dbReference type="SUPFAM" id="SSF89562">
    <property type="entry name" value="RraA-like"/>
    <property type="match status" value="1"/>
</dbReference>
<reference key="1">
    <citation type="submission" date="2006-02" db="EMBL/GenBank/DDBJ databases">
        <title>Complete sequence of chromosome of Rhodoferax ferrireducens DSM 15236.</title>
        <authorList>
            <person name="Copeland A."/>
            <person name="Lucas S."/>
            <person name="Lapidus A."/>
            <person name="Barry K."/>
            <person name="Detter J.C."/>
            <person name="Glavina del Rio T."/>
            <person name="Hammon N."/>
            <person name="Israni S."/>
            <person name="Pitluck S."/>
            <person name="Brettin T."/>
            <person name="Bruce D."/>
            <person name="Han C."/>
            <person name="Tapia R."/>
            <person name="Gilna P."/>
            <person name="Kiss H."/>
            <person name="Schmutz J."/>
            <person name="Larimer F."/>
            <person name="Land M."/>
            <person name="Kyrpides N."/>
            <person name="Ivanova N."/>
            <person name="Richardson P."/>
        </authorList>
    </citation>
    <scope>NUCLEOTIDE SEQUENCE [LARGE SCALE GENOMIC DNA]</scope>
    <source>
        <strain>ATCC BAA-621 / DSM 15236 / T118</strain>
    </source>
</reference>
<sequence length="173" mass="18017">MTPSFATCDLCDAHKNDVSGAFRVLPPVFRDFGGVRQFCGPVVTVKCFEDNSSVKAAVESVGYQETPAGRVGKVLVVDGGGSLRRALLGGNLGAAAARNGWAGVVIDGCVRDVSELAAVGLGIRALASMPLPTEKRGEGQSDLALQIQGVWVRPGDWLYADEDGMVLAAGRLV</sequence>
<comment type="function">
    <text evidence="1">Catalyzes the aldol cleavage of 4-hydroxy-4-methyl-2-oxoglutarate (HMG) into 2 molecules of pyruvate. Also contains a secondary oxaloacetate (OAA) decarboxylase activity due to the common pyruvate enolate transition state formed following C-C bond cleavage in the retro-aldol and decarboxylation reactions (By similarity).</text>
</comment>
<comment type="catalytic activity">
    <reaction>
        <text>4-hydroxy-4-methyl-2-oxoglutarate = 2 pyruvate</text>
        <dbReference type="Rhea" id="RHEA:22748"/>
        <dbReference type="ChEBI" id="CHEBI:15361"/>
        <dbReference type="ChEBI" id="CHEBI:58276"/>
        <dbReference type="EC" id="4.1.3.17"/>
    </reaction>
</comment>
<comment type="catalytic activity">
    <reaction>
        <text>oxaloacetate + H(+) = pyruvate + CO2</text>
        <dbReference type="Rhea" id="RHEA:15641"/>
        <dbReference type="ChEBI" id="CHEBI:15361"/>
        <dbReference type="ChEBI" id="CHEBI:15378"/>
        <dbReference type="ChEBI" id="CHEBI:16452"/>
        <dbReference type="ChEBI" id="CHEBI:16526"/>
        <dbReference type="EC" id="4.1.1.112"/>
    </reaction>
</comment>
<comment type="cofactor">
    <cofactor evidence="1">
        <name>a divalent metal cation</name>
        <dbReference type="ChEBI" id="CHEBI:60240"/>
    </cofactor>
    <text evidence="1">Divalent metal cation.</text>
</comment>
<comment type="subunit">
    <text evidence="1">Homotrimer.</text>
</comment>
<comment type="similarity">
    <text evidence="2">Belongs to the class II aldolase/RraA-like family.</text>
</comment>
<accession>Q21X23</accession>
<evidence type="ECO:0000250" key="1"/>
<evidence type="ECO:0000305" key="2"/>
<proteinExistence type="inferred from homology"/>
<organism>
    <name type="scientific">Albidiferax ferrireducens (strain ATCC BAA-621 / DSM 15236 / T118)</name>
    <name type="common">Rhodoferax ferrireducens</name>
    <dbReference type="NCBI Taxonomy" id="338969"/>
    <lineage>
        <taxon>Bacteria</taxon>
        <taxon>Pseudomonadati</taxon>
        <taxon>Pseudomonadota</taxon>
        <taxon>Betaproteobacteria</taxon>
        <taxon>Burkholderiales</taxon>
        <taxon>Comamonadaceae</taxon>
        <taxon>Rhodoferax</taxon>
    </lineage>
</organism>
<keyword id="KW-0456">Lyase</keyword>
<keyword id="KW-0479">Metal-binding</keyword>
<keyword id="KW-1185">Reference proteome</keyword>
<name>RRAAH_ALBFT</name>
<gene>
    <name type="ordered locus">Rfer_1955</name>
</gene>
<feature type="chain" id="PRO_1000194868" description="Putative 4-hydroxy-4-methyl-2-oxoglutarate aldolase">
    <location>
        <begin position="1"/>
        <end position="173"/>
    </location>
</feature>
<feature type="binding site" evidence="1">
    <location>
        <begin position="89"/>
        <end position="92"/>
    </location>
    <ligand>
        <name>substrate</name>
    </ligand>
</feature>
<feature type="binding site" evidence="1">
    <location>
        <position position="111"/>
    </location>
    <ligand>
        <name>substrate</name>
    </ligand>
</feature>
<feature type="binding site" evidence="1">
    <location>
        <position position="112"/>
    </location>
    <ligand>
        <name>a divalent metal cation</name>
        <dbReference type="ChEBI" id="CHEBI:60240"/>
    </ligand>
</feature>